<comment type="function">
    <text evidence="1">Allows the formation of correctly charged Asn-tRNA(Asn) or Gln-tRNA(Gln) through the transamidation of misacylated Asp-tRNA(Asn) or Glu-tRNA(Gln) in organisms which lack either or both of asparaginyl-tRNA or glutaminyl-tRNA synthetases. The reaction takes place in the presence of glutamine and ATP through an activated phospho-Asp-tRNA(Asn) or phospho-Glu-tRNA(Gln).</text>
</comment>
<comment type="catalytic activity">
    <reaction evidence="1">
        <text>L-glutamyl-tRNA(Gln) + L-glutamine + ATP + H2O = L-glutaminyl-tRNA(Gln) + L-glutamate + ADP + phosphate + H(+)</text>
        <dbReference type="Rhea" id="RHEA:17521"/>
        <dbReference type="Rhea" id="RHEA-COMP:9681"/>
        <dbReference type="Rhea" id="RHEA-COMP:9684"/>
        <dbReference type="ChEBI" id="CHEBI:15377"/>
        <dbReference type="ChEBI" id="CHEBI:15378"/>
        <dbReference type="ChEBI" id="CHEBI:29985"/>
        <dbReference type="ChEBI" id="CHEBI:30616"/>
        <dbReference type="ChEBI" id="CHEBI:43474"/>
        <dbReference type="ChEBI" id="CHEBI:58359"/>
        <dbReference type="ChEBI" id="CHEBI:78520"/>
        <dbReference type="ChEBI" id="CHEBI:78521"/>
        <dbReference type="ChEBI" id="CHEBI:456216"/>
    </reaction>
</comment>
<comment type="catalytic activity">
    <reaction evidence="1">
        <text>L-aspartyl-tRNA(Asn) + L-glutamine + ATP + H2O = L-asparaginyl-tRNA(Asn) + L-glutamate + ADP + phosphate + 2 H(+)</text>
        <dbReference type="Rhea" id="RHEA:14513"/>
        <dbReference type="Rhea" id="RHEA-COMP:9674"/>
        <dbReference type="Rhea" id="RHEA-COMP:9677"/>
        <dbReference type="ChEBI" id="CHEBI:15377"/>
        <dbReference type="ChEBI" id="CHEBI:15378"/>
        <dbReference type="ChEBI" id="CHEBI:29985"/>
        <dbReference type="ChEBI" id="CHEBI:30616"/>
        <dbReference type="ChEBI" id="CHEBI:43474"/>
        <dbReference type="ChEBI" id="CHEBI:58359"/>
        <dbReference type="ChEBI" id="CHEBI:78515"/>
        <dbReference type="ChEBI" id="CHEBI:78516"/>
        <dbReference type="ChEBI" id="CHEBI:456216"/>
    </reaction>
</comment>
<comment type="subunit">
    <text evidence="1">Heterotrimer of A, B and C subunits.</text>
</comment>
<comment type="similarity">
    <text evidence="1">Belongs to the GatC family.</text>
</comment>
<sequence>MSLTHQDVARIAKLARINVSEAEIAATADQLNNIFGLIEKMQAVDTAGIEPMAHPQDVSLRLRDDVVTEPNRREAFQAVAPQVEKGLFLVPKVIE</sequence>
<gene>
    <name evidence="1" type="primary">gatC</name>
    <name type="ordered locus">CV_4356</name>
</gene>
<name>GATC_CHRVO</name>
<feature type="chain" id="PRO_0000105292" description="Aspartyl/glutamyl-tRNA(Asn/Gln) amidotransferase subunit C">
    <location>
        <begin position="1"/>
        <end position="95"/>
    </location>
</feature>
<reference key="1">
    <citation type="journal article" date="2003" name="Proc. Natl. Acad. Sci. U.S.A.">
        <title>The complete genome sequence of Chromobacterium violaceum reveals remarkable and exploitable bacterial adaptability.</title>
        <authorList>
            <person name="Vasconcelos A.T.R."/>
            <person name="de Almeida D.F."/>
            <person name="Hungria M."/>
            <person name="Guimaraes C.T."/>
            <person name="Antonio R.V."/>
            <person name="Almeida F.C."/>
            <person name="de Almeida L.G.P."/>
            <person name="de Almeida R."/>
            <person name="Alves-Gomes J.A."/>
            <person name="Andrade E.M."/>
            <person name="Araripe J."/>
            <person name="de Araujo M.F.F."/>
            <person name="Astolfi-Filho S."/>
            <person name="Azevedo V."/>
            <person name="Baptista A.J."/>
            <person name="Bataus L.A.M."/>
            <person name="Batista J.S."/>
            <person name="Belo A."/>
            <person name="van den Berg C."/>
            <person name="Bogo M."/>
            <person name="Bonatto S."/>
            <person name="Bordignon J."/>
            <person name="Brigido M.M."/>
            <person name="Brito C.A."/>
            <person name="Brocchi M."/>
            <person name="Burity H.A."/>
            <person name="Camargo A.A."/>
            <person name="Cardoso D.D.P."/>
            <person name="Carneiro N.P."/>
            <person name="Carraro D.M."/>
            <person name="Carvalho C.M.B."/>
            <person name="Cascardo J.C.M."/>
            <person name="Cavada B.S."/>
            <person name="Chueire L.M.O."/>
            <person name="Creczynski-Pasa T.B."/>
            <person name="Cunha-Junior N.C."/>
            <person name="Fagundes N."/>
            <person name="Falcao C.L."/>
            <person name="Fantinatti F."/>
            <person name="Farias I.P."/>
            <person name="Felipe M.S.S."/>
            <person name="Ferrari L.P."/>
            <person name="Ferro J.A."/>
            <person name="Ferro M.I.T."/>
            <person name="Franco G.R."/>
            <person name="Freitas N.S.A."/>
            <person name="Furlan L.R."/>
            <person name="Gazzinelli R.T."/>
            <person name="Gomes E.A."/>
            <person name="Goncalves P.R."/>
            <person name="Grangeiro T.B."/>
            <person name="Grattapaglia D."/>
            <person name="Grisard E.C."/>
            <person name="Hanna E.S."/>
            <person name="Jardim S.N."/>
            <person name="Laurino J."/>
            <person name="Leoi L.C.T."/>
            <person name="Lima L.F.A."/>
            <person name="Loureiro M.F."/>
            <person name="Lyra M.C.C.P."/>
            <person name="Madeira H.M.F."/>
            <person name="Manfio G.P."/>
            <person name="Maranhao A.Q."/>
            <person name="Martins W.S."/>
            <person name="di Mauro S.M.Z."/>
            <person name="de Medeiros S.R.B."/>
            <person name="Meissner R.V."/>
            <person name="Moreira M.A.M."/>
            <person name="Nascimento F.F."/>
            <person name="Nicolas M.F."/>
            <person name="Oliveira J.G."/>
            <person name="Oliveira S.C."/>
            <person name="Paixao R.F.C."/>
            <person name="Parente J.A."/>
            <person name="Pedrosa F.O."/>
            <person name="Pena S.D.J."/>
            <person name="Pereira J.O."/>
            <person name="Pereira M."/>
            <person name="Pinto L.S.R.C."/>
            <person name="Pinto L.S."/>
            <person name="Porto J.I.R."/>
            <person name="Potrich D.P."/>
            <person name="Ramalho-Neto C.E."/>
            <person name="Reis A.M.M."/>
            <person name="Rigo L.U."/>
            <person name="Rondinelli E."/>
            <person name="Santos E.B.P."/>
            <person name="Santos F.R."/>
            <person name="Schneider M.P.C."/>
            <person name="Seuanez H.N."/>
            <person name="Silva A.M.R."/>
            <person name="da Silva A.L.C."/>
            <person name="Silva D.W."/>
            <person name="Silva R."/>
            <person name="Simoes I.C."/>
            <person name="Simon D."/>
            <person name="Soares C.M.A."/>
            <person name="Soares R.B.A."/>
            <person name="Souza E.M."/>
            <person name="Souza K.R.L."/>
            <person name="Souza R.C."/>
            <person name="Steffens M.B.R."/>
            <person name="Steindel M."/>
            <person name="Teixeira S.R."/>
            <person name="Urmenyi T."/>
            <person name="Vettore A."/>
            <person name="Wassem R."/>
            <person name="Zaha A."/>
            <person name="Simpson A.J.G."/>
        </authorList>
    </citation>
    <scope>NUCLEOTIDE SEQUENCE [LARGE SCALE GENOMIC DNA]</scope>
    <source>
        <strain>ATCC 12472 / DSM 30191 / JCM 1249 / CCUG 213 / NBRC 12614 / NCIMB 9131 / NCTC 9757 / MK</strain>
    </source>
</reference>
<keyword id="KW-0067">ATP-binding</keyword>
<keyword id="KW-0436">Ligase</keyword>
<keyword id="KW-0547">Nucleotide-binding</keyword>
<keyword id="KW-0648">Protein biosynthesis</keyword>
<keyword id="KW-1185">Reference proteome</keyword>
<dbReference type="EC" id="6.3.5.-" evidence="1"/>
<dbReference type="EMBL" id="AE016825">
    <property type="protein sequence ID" value="AAQ62015.1"/>
    <property type="molecule type" value="Genomic_DNA"/>
</dbReference>
<dbReference type="RefSeq" id="WP_011137902.1">
    <property type="nucleotide sequence ID" value="NC_005085.1"/>
</dbReference>
<dbReference type="SMR" id="Q7NPY6"/>
<dbReference type="STRING" id="243365.CV_4356"/>
<dbReference type="GeneID" id="66366162"/>
<dbReference type="KEGG" id="cvi:CV_4356"/>
<dbReference type="eggNOG" id="COG0721">
    <property type="taxonomic scope" value="Bacteria"/>
</dbReference>
<dbReference type="HOGENOM" id="CLU_105899_2_2_4"/>
<dbReference type="OrthoDB" id="9794326at2"/>
<dbReference type="Proteomes" id="UP000001424">
    <property type="component" value="Chromosome"/>
</dbReference>
<dbReference type="GO" id="GO:0050566">
    <property type="term" value="F:asparaginyl-tRNA synthase (glutamine-hydrolyzing) activity"/>
    <property type="evidence" value="ECO:0007669"/>
    <property type="project" value="RHEA"/>
</dbReference>
<dbReference type="GO" id="GO:0005524">
    <property type="term" value="F:ATP binding"/>
    <property type="evidence" value="ECO:0007669"/>
    <property type="project" value="UniProtKB-KW"/>
</dbReference>
<dbReference type="GO" id="GO:0050567">
    <property type="term" value="F:glutaminyl-tRNA synthase (glutamine-hydrolyzing) activity"/>
    <property type="evidence" value="ECO:0007669"/>
    <property type="project" value="UniProtKB-UniRule"/>
</dbReference>
<dbReference type="GO" id="GO:0070681">
    <property type="term" value="P:glutaminyl-tRNAGln biosynthesis via transamidation"/>
    <property type="evidence" value="ECO:0007669"/>
    <property type="project" value="TreeGrafter"/>
</dbReference>
<dbReference type="GO" id="GO:0006450">
    <property type="term" value="P:regulation of translational fidelity"/>
    <property type="evidence" value="ECO:0007669"/>
    <property type="project" value="InterPro"/>
</dbReference>
<dbReference type="GO" id="GO:0006412">
    <property type="term" value="P:translation"/>
    <property type="evidence" value="ECO:0007669"/>
    <property type="project" value="UniProtKB-UniRule"/>
</dbReference>
<dbReference type="Gene3D" id="1.10.20.60">
    <property type="entry name" value="Glu-tRNAGln amidotransferase C subunit, N-terminal domain"/>
    <property type="match status" value="1"/>
</dbReference>
<dbReference type="HAMAP" id="MF_00122">
    <property type="entry name" value="GatC"/>
    <property type="match status" value="1"/>
</dbReference>
<dbReference type="InterPro" id="IPR036113">
    <property type="entry name" value="Asp/Glu-ADT_sf_sub_c"/>
</dbReference>
<dbReference type="InterPro" id="IPR003837">
    <property type="entry name" value="GatC"/>
</dbReference>
<dbReference type="NCBIfam" id="TIGR00135">
    <property type="entry name" value="gatC"/>
    <property type="match status" value="1"/>
</dbReference>
<dbReference type="PANTHER" id="PTHR15004">
    <property type="entry name" value="GLUTAMYL-TRNA(GLN) AMIDOTRANSFERASE SUBUNIT C, MITOCHONDRIAL"/>
    <property type="match status" value="1"/>
</dbReference>
<dbReference type="PANTHER" id="PTHR15004:SF0">
    <property type="entry name" value="GLUTAMYL-TRNA(GLN) AMIDOTRANSFERASE SUBUNIT C, MITOCHONDRIAL"/>
    <property type="match status" value="1"/>
</dbReference>
<dbReference type="Pfam" id="PF02686">
    <property type="entry name" value="GatC"/>
    <property type="match status" value="1"/>
</dbReference>
<dbReference type="SUPFAM" id="SSF141000">
    <property type="entry name" value="Glu-tRNAGln amidotransferase C subunit"/>
    <property type="match status" value="1"/>
</dbReference>
<accession>Q7NPY6</accession>
<evidence type="ECO:0000255" key="1">
    <source>
        <dbReference type="HAMAP-Rule" id="MF_00122"/>
    </source>
</evidence>
<organism>
    <name type="scientific">Chromobacterium violaceum (strain ATCC 12472 / DSM 30191 / JCM 1249 / CCUG 213 / NBRC 12614 / NCIMB 9131 / NCTC 9757 / MK)</name>
    <dbReference type="NCBI Taxonomy" id="243365"/>
    <lineage>
        <taxon>Bacteria</taxon>
        <taxon>Pseudomonadati</taxon>
        <taxon>Pseudomonadota</taxon>
        <taxon>Betaproteobacteria</taxon>
        <taxon>Neisseriales</taxon>
        <taxon>Chromobacteriaceae</taxon>
        <taxon>Chromobacterium</taxon>
    </lineage>
</organism>
<proteinExistence type="inferred from homology"/>
<protein>
    <recommendedName>
        <fullName evidence="1">Aspartyl/glutamyl-tRNA(Asn/Gln) amidotransferase subunit C</fullName>
        <shortName evidence="1">Asp/Glu-ADT subunit C</shortName>
        <ecNumber evidence="1">6.3.5.-</ecNumber>
    </recommendedName>
</protein>